<gene>
    <name type="ORF">TRIADDRAFT_19292</name>
</gene>
<name>MTNA_TRIAD</name>
<accession>B3RLE6</accession>
<evidence type="ECO:0000255" key="1">
    <source>
        <dbReference type="HAMAP-Rule" id="MF_03119"/>
    </source>
</evidence>
<proteinExistence type="inferred from homology"/>
<organism>
    <name type="scientific">Trichoplax adhaerens</name>
    <name type="common">Trichoplax reptans</name>
    <dbReference type="NCBI Taxonomy" id="10228"/>
    <lineage>
        <taxon>Eukaryota</taxon>
        <taxon>Metazoa</taxon>
        <taxon>Placozoa</taxon>
        <taxon>Uniplacotomia</taxon>
        <taxon>Trichoplacea</taxon>
        <taxon>Trichoplacidae</taxon>
        <taxon>Trichoplax</taxon>
    </lineage>
</organism>
<protein>
    <recommendedName>
        <fullName evidence="1">Methylthioribose-1-phosphate isomerase</fullName>
        <shortName evidence="1">M1Pi</shortName>
        <shortName evidence="1">MTR-1-P isomerase</shortName>
        <ecNumber evidence="1">5.3.1.23</ecNumber>
    </recommendedName>
    <alternativeName>
        <fullName evidence="1">S-methyl-5-thioribose-1-phosphate isomerase</fullName>
    </alternativeName>
    <alternativeName>
        <fullName evidence="1">Translation initiation factor eIF-2B subunit alpha/beta/delta-like protein</fullName>
    </alternativeName>
</protein>
<keyword id="KW-0028">Amino-acid biosynthesis</keyword>
<keyword id="KW-0963">Cytoplasm</keyword>
<keyword id="KW-0413">Isomerase</keyword>
<keyword id="KW-0486">Methionine biosynthesis</keyword>
<keyword id="KW-0539">Nucleus</keyword>
<keyword id="KW-1185">Reference proteome</keyword>
<sequence length="360" mass="39509">MTEQQSLEAIRYDHDHGQLKILNQLLLPSEYVYENVEGIEDGWQAIRQMKVRGAPAIAIVGMLSLAVELRSKSFTEMNEFDKFIRDSLEHLKTARPTAVNIFLACDLITKLIDNLIILGDEAVGVAKIEVIRHIEEMLHKDVESNKRIGSYGAEAILAKVPSKEKINVLTHCNTGSLATAGYGTALGVIRSLYGRDSIDRVFCTETRPYNQGSRLTAFELVHDGIPATLITDSMASLVMKKKDISAVVVGADRVLGNGDTANKIGTYQLAITAKYHKIPFYIAAPTTTIVLDDSKDIVIEERSHKEVTEIQGIPIAPSGINVYNPAFDVTPAELITGIITEVGVFSPSEMKSKLQTILNS</sequence>
<reference key="1">
    <citation type="journal article" date="2008" name="Nature">
        <title>The Trichoplax genome and the nature of placozoans.</title>
        <authorList>
            <person name="Srivastava M."/>
            <person name="Begovic E."/>
            <person name="Chapman J."/>
            <person name="Putnam N.H."/>
            <person name="Hellsten U."/>
            <person name="Kawashima T."/>
            <person name="Kuo A."/>
            <person name="Mitros T."/>
            <person name="Salamov A."/>
            <person name="Carpenter M.L."/>
            <person name="Signorovitch A.Y."/>
            <person name="Moreno M.A."/>
            <person name="Kamm K."/>
            <person name="Grimwood J."/>
            <person name="Schmutz J."/>
            <person name="Shapiro H."/>
            <person name="Grigoriev I.V."/>
            <person name="Buss L.W."/>
            <person name="Schierwater B."/>
            <person name="Dellaporta S.L."/>
            <person name="Rokhsar D.S."/>
        </authorList>
    </citation>
    <scope>NUCLEOTIDE SEQUENCE [LARGE SCALE GENOMIC DNA]</scope>
    <source>
        <strain>Grell-BS-1999</strain>
    </source>
</reference>
<comment type="function">
    <text evidence="1">Catalyzes the interconversion of methylthioribose-1-phosphate (MTR-1-P) into methylthioribulose-1-phosphate (MTRu-1-P).</text>
</comment>
<comment type="catalytic activity">
    <reaction evidence="1">
        <text>5-(methylsulfanyl)-alpha-D-ribose 1-phosphate = 5-(methylsulfanyl)-D-ribulose 1-phosphate</text>
        <dbReference type="Rhea" id="RHEA:19989"/>
        <dbReference type="ChEBI" id="CHEBI:58533"/>
        <dbReference type="ChEBI" id="CHEBI:58548"/>
        <dbReference type="EC" id="5.3.1.23"/>
    </reaction>
</comment>
<comment type="pathway">
    <text evidence="1">Amino-acid biosynthesis; L-methionine biosynthesis via salvage pathway; L-methionine from S-methyl-5-thio-alpha-D-ribose 1-phosphate: step 1/6.</text>
</comment>
<comment type="subcellular location">
    <subcellularLocation>
        <location evidence="1">Cytoplasm</location>
    </subcellularLocation>
    <subcellularLocation>
        <location evidence="1">Nucleus</location>
    </subcellularLocation>
</comment>
<comment type="similarity">
    <text evidence="1">Belongs to the eIF-2B alpha/beta/delta subunits family. MtnA subfamily.</text>
</comment>
<dbReference type="EC" id="5.3.1.23" evidence="1"/>
<dbReference type="EMBL" id="DS985241">
    <property type="protein sequence ID" value="EDV28753.1"/>
    <property type="molecule type" value="Genomic_DNA"/>
</dbReference>
<dbReference type="RefSeq" id="XP_002107955.1">
    <property type="nucleotide sequence ID" value="XM_002107919.1"/>
</dbReference>
<dbReference type="SMR" id="B3RLE6"/>
<dbReference type="FunCoup" id="B3RLE6">
    <property type="interactions" value="1387"/>
</dbReference>
<dbReference type="STRING" id="10228.B3RLE6"/>
<dbReference type="EnsemblMetazoa" id="TriadT19292">
    <property type="protein sequence ID" value="TriadP19292"/>
    <property type="gene ID" value="TriadG19292"/>
</dbReference>
<dbReference type="GeneID" id="6749947"/>
<dbReference type="KEGG" id="tad:TRIADDRAFT_19292"/>
<dbReference type="CTD" id="6749947"/>
<dbReference type="eggNOG" id="KOG1468">
    <property type="taxonomic scope" value="Eukaryota"/>
</dbReference>
<dbReference type="HOGENOM" id="CLU_016218_1_3_1"/>
<dbReference type="InParanoid" id="B3RLE6"/>
<dbReference type="OMA" id="CETRPLN"/>
<dbReference type="OrthoDB" id="2461at2759"/>
<dbReference type="PhylomeDB" id="B3RLE6"/>
<dbReference type="UniPathway" id="UPA00904">
    <property type="reaction ID" value="UER00874"/>
</dbReference>
<dbReference type="Proteomes" id="UP000009022">
    <property type="component" value="Unassembled WGS sequence"/>
</dbReference>
<dbReference type="GO" id="GO:0005737">
    <property type="term" value="C:cytoplasm"/>
    <property type="evidence" value="ECO:0007669"/>
    <property type="project" value="UniProtKB-SubCell"/>
</dbReference>
<dbReference type="GO" id="GO:0005634">
    <property type="term" value="C:nucleus"/>
    <property type="evidence" value="ECO:0007669"/>
    <property type="project" value="UniProtKB-SubCell"/>
</dbReference>
<dbReference type="GO" id="GO:0046523">
    <property type="term" value="F:S-methyl-5-thioribose-1-phosphate isomerase activity"/>
    <property type="evidence" value="ECO:0000318"/>
    <property type="project" value="GO_Central"/>
</dbReference>
<dbReference type="GO" id="GO:0019509">
    <property type="term" value="P:L-methionine salvage from methylthioadenosine"/>
    <property type="evidence" value="ECO:0000318"/>
    <property type="project" value="GO_Central"/>
</dbReference>
<dbReference type="FunFam" id="1.20.120.420:FF:000003">
    <property type="entry name" value="Methylthioribose-1-phosphate isomerase"/>
    <property type="match status" value="1"/>
</dbReference>
<dbReference type="FunFam" id="3.40.50.10470:FF:000003">
    <property type="entry name" value="Methylthioribose-1-phosphate isomerase"/>
    <property type="match status" value="1"/>
</dbReference>
<dbReference type="Gene3D" id="1.20.120.420">
    <property type="entry name" value="translation initiation factor eif-2b, domain 1"/>
    <property type="match status" value="1"/>
</dbReference>
<dbReference type="Gene3D" id="3.40.50.10470">
    <property type="entry name" value="Translation initiation factor eif-2b, domain 2"/>
    <property type="match status" value="1"/>
</dbReference>
<dbReference type="HAMAP" id="MF_01678">
    <property type="entry name" value="Salvage_MtnA"/>
    <property type="match status" value="1"/>
</dbReference>
<dbReference type="InterPro" id="IPR000649">
    <property type="entry name" value="IF-2B-related"/>
</dbReference>
<dbReference type="InterPro" id="IPR005251">
    <property type="entry name" value="IF-M1Pi"/>
</dbReference>
<dbReference type="InterPro" id="IPR042529">
    <property type="entry name" value="IF_2B-like_C"/>
</dbReference>
<dbReference type="InterPro" id="IPR011559">
    <property type="entry name" value="Initiation_fac_2B_a/b/d"/>
</dbReference>
<dbReference type="InterPro" id="IPR027363">
    <property type="entry name" value="M1Pi_N"/>
</dbReference>
<dbReference type="InterPro" id="IPR037171">
    <property type="entry name" value="NagB/RpiA_transferase-like"/>
</dbReference>
<dbReference type="NCBIfam" id="TIGR00524">
    <property type="entry name" value="eIF-2B_rel"/>
    <property type="match status" value="1"/>
</dbReference>
<dbReference type="NCBIfam" id="NF004326">
    <property type="entry name" value="PRK05720.1"/>
    <property type="match status" value="1"/>
</dbReference>
<dbReference type="NCBIfam" id="TIGR00512">
    <property type="entry name" value="salvage_mtnA"/>
    <property type="match status" value="1"/>
</dbReference>
<dbReference type="PANTHER" id="PTHR43475">
    <property type="entry name" value="METHYLTHIORIBOSE-1-PHOSPHATE ISOMERASE"/>
    <property type="match status" value="1"/>
</dbReference>
<dbReference type="PANTHER" id="PTHR43475:SF1">
    <property type="entry name" value="METHYLTHIORIBOSE-1-PHOSPHATE ISOMERASE"/>
    <property type="match status" value="1"/>
</dbReference>
<dbReference type="Pfam" id="PF01008">
    <property type="entry name" value="IF-2B"/>
    <property type="match status" value="1"/>
</dbReference>
<dbReference type="SUPFAM" id="SSF100950">
    <property type="entry name" value="NagB/RpiA/CoA transferase-like"/>
    <property type="match status" value="1"/>
</dbReference>
<feature type="chain" id="PRO_0000402063" description="Methylthioribose-1-phosphate isomerase">
    <location>
        <begin position="1"/>
        <end position="360"/>
    </location>
</feature>
<feature type="active site" description="Proton donor" evidence="1">
    <location>
        <position position="252"/>
    </location>
</feature>
<feature type="site" description="Transition state stabilizer" evidence="1">
    <location>
        <position position="172"/>
    </location>
</feature>